<comment type="subcellular location">
    <subcellularLocation>
        <location evidence="1">Cell inner membrane</location>
        <topology evidence="1">Multi-pass membrane protein</topology>
    </subcellularLocation>
</comment>
<comment type="similarity">
    <text evidence="1">Belongs to the UPF0266 family.</text>
</comment>
<protein>
    <recommendedName>
        <fullName evidence="1">UPF0266 membrane protein YobD</fullName>
    </recommendedName>
</protein>
<proteinExistence type="inferred from homology"/>
<accession>C4ZZH6</accession>
<sequence>MTITDLVLILFIAALLAFAIYDQFIMPRRNGPTLLAIPLLRRGRIDSVIFVGLIVILIYNNVTNHGALITTWLLSALALMGFYIFWIRVPKIIFKQKGFFFANVWIEYSRIKAMNLSEDGVLVMQLEQRRLLIRVRNIDDLEKIYKLLVSTQ</sequence>
<organism>
    <name type="scientific">Escherichia coli (strain K12 / MC4100 / BW2952)</name>
    <dbReference type="NCBI Taxonomy" id="595496"/>
    <lineage>
        <taxon>Bacteria</taxon>
        <taxon>Pseudomonadati</taxon>
        <taxon>Pseudomonadota</taxon>
        <taxon>Gammaproteobacteria</taxon>
        <taxon>Enterobacterales</taxon>
        <taxon>Enterobacteriaceae</taxon>
        <taxon>Escherichia</taxon>
    </lineage>
</organism>
<reference key="1">
    <citation type="journal article" date="2009" name="J. Bacteriol.">
        <title>Genomic sequencing reveals regulatory mutations and recombinational events in the widely used MC4100 lineage of Escherichia coli K-12.</title>
        <authorList>
            <person name="Ferenci T."/>
            <person name="Zhou Z."/>
            <person name="Betteridge T."/>
            <person name="Ren Y."/>
            <person name="Liu Y."/>
            <person name="Feng L."/>
            <person name="Reeves P.R."/>
            <person name="Wang L."/>
        </authorList>
    </citation>
    <scope>NUCLEOTIDE SEQUENCE [LARGE SCALE GENOMIC DNA]</scope>
    <source>
        <strain>K12 / MC4100 / BW2952</strain>
    </source>
</reference>
<name>YOBD_ECOBW</name>
<evidence type="ECO:0000255" key="1">
    <source>
        <dbReference type="HAMAP-Rule" id="MF_01071"/>
    </source>
</evidence>
<keyword id="KW-0997">Cell inner membrane</keyword>
<keyword id="KW-1003">Cell membrane</keyword>
<keyword id="KW-0472">Membrane</keyword>
<keyword id="KW-0812">Transmembrane</keyword>
<keyword id="KW-1133">Transmembrane helix</keyword>
<gene>
    <name evidence="1" type="primary">yobD</name>
    <name type="ordered locus">BWG_1633</name>
</gene>
<feature type="chain" id="PRO_1000213473" description="UPF0266 membrane protein YobD">
    <location>
        <begin position="1"/>
        <end position="152"/>
    </location>
</feature>
<feature type="transmembrane region" description="Helical" evidence="1">
    <location>
        <begin position="6"/>
        <end position="26"/>
    </location>
</feature>
<feature type="transmembrane region" description="Helical" evidence="1">
    <location>
        <begin position="45"/>
        <end position="65"/>
    </location>
</feature>
<feature type="transmembrane region" description="Helical" evidence="1">
    <location>
        <begin position="67"/>
        <end position="87"/>
    </location>
</feature>
<dbReference type="EMBL" id="CP001396">
    <property type="protein sequence ID" value="ACR62221.1"/>
    <property type="molecule type" value="Genomic_DNA"/>
</dbReference>
<dbReference type="RefSeq" id="WP_000156255.1">
    <property type="nucleotide sequence ID" value="NC_012759.1"/>
</dbReference>
<dbReference type="KEGG" id="ebw:BWG_1633"/>
<dbReference type="HOGENOM" id="CLU_133645_0_0_6"/>
<dbReference type="GO" id="GO:0005886">
    <property type="term" value="C:plasma membrane"/>
    <property type="evidence" value="ECO:0007669"/>
    <property type="project" value="UniProtKB-SubCell"/>
</dbReference>
<dbReference type="HAMAP" id="MF_01071">
    <property type="entry name" value="UPF0266"/>
    <property type="match status" value="1"/>
</dbReference>
<dbReference type="InterPro" id="IPR009328">
    <property type="entry name" value="DUF986"/>
</dbReference>
<dbReference type="NCBIfam" id="NF002791">
    <property type="entry name" value="PRK02913.1"/>
    <property type="match status" value="1"/>
</dbReference>
<dbReference type="Pfam" id="PF06173">
    <property type="entry name" value="DUF986"/>
    <property type="match status" value="1"/>
</dbReference>
<dbReference type="PIRSF" id="PIRSF020687">
    <property type="entry name" value="UCP020687"/>
    <property type="match status" value="1"/>
</dbReference>